<organism>
    <name type="scientific">Brucella suis biovar 1 (strain 1330)</name>
    <dbReference type="NCBI Taxonomy" id="204722"/>
    <lineage>
        <taxon>Bacteria</taxon>
        <taxon>Pseudomonadati</taxon>
        <taxon>Pseudomonadota</taxon>
        <taxon>Alphaproteobacteria</taxon>
        <taxon>Hyphomicrobiales</taxon>
        <taxon>Brucellaceae</taxon>
        <taxon>Brucella/Ochrobactrum group</taxon>
        <taxon>Brucella</taxon>
    </lineage>
</organism>
<gene>
    <name evidence="1" type="primary">lipB</name>
    <name type="ordered locus">BRA0589</name>
    <name type="ordered locus">BS1330_II0584</name>
</gene>
<reference key="1">
    <citation type="journal article" date="2002" name="Proc. Natl. Acad. Sci. U.S.A.">
        <title>The Brucella suis genome reveals fundamental similarities between animal and plant pathogens and symbionts.</title>
        <authorList>
            <person name="Paulsen I.T."/>
            <person name="Seshadri R."/>
            <person name="Nelson K.E."/>
            <person name="Eisen J.A."/>
            <person name="Heidelberg J.F."/>
            <person name="Read T.D."/>
            <person name="Dodson R.J."/>
            <person name="Umayam L.A."/>
            <person name="Brinkac L.M."/>
            <person name="Beanan M.J."/>
            <person name="Daugherty S.C."/>
            <person name="DeBoy R.T."/>
            <person name="Durkin A.S."/>
            <person name="Kolonay J.F."/>
            <person name="Madupu R."/>
            <person name="Nelson W.C."/>
            <person name="Ayodeji B."/>
            <person name="Kraul M."/>
            <person name="Shetty J."/>
            <person name="Malek J.A."/>
            <person name="Van Aken S.E."/>
            <person name="Riedmuller S."/>
            <person name="Tettelin H."/>
            <person name="Gill S.R."/>
            <person name="White O."/>
            <person name="Salzberg S.L."/>
            <person name="Hoover D.L."/>
            <person name="Lindler L.E."/>
            <person name="Halling S.M."/>
            <person name="Boyle S.M."/>
            <person name="Fraser C.M."/>
        </authorList>
    </citation>
    <scope>NUCLEOTIDE SEQUENCE [LARGE SCALE GENOMIC DNA]</scope>
    <source>
        <strain>1330</strain>
    </source>
</reference>
<reference key="2">
    <citation type="journal article" date="2011" name="J. Bacteriol.">
        <title>Revised genome sequence of Brucella suis 1330.</title>
        <authorList>
            <person name="Tae H."/>
            <person name="Shallom S."/>
            <person name="Settlage R."/>
            <person name="Preston D."/>
            <person name="Adams L.G."/>
            <person name="Garner H.R."/>
        </authorList>
    </citation>
    <scope>NUCLEOTIDE SEQUENCE [LARGE SCALE GENOMIC DNA]</scope>
    <source>
        <strain>1330</strain>
    </source>
</reference>
<name>LIPB_BRUSU</name>
<dbReference type="EC" id="2.3.1.181" evidence="1"/>
<dbReference type="EMBL" id="AE014292">
    <property type="protein sequence ID" value="AAN33778.1"/>
    <property type="molecule type" value="Genomic_DNA"/>
</dbReference>
<dbReference type="EMBL" id="CP002998">
    <property type="protein sequence ID" value="AEM20055.1"/>
    <property type="molecule type" value="Genomic_DNA"/>
</dbReference>
<dbReference type="SMR" id="Q8FW72"/>
<dbReference type="KEGG" id="bms:BRA0589"/>
<dbReference type="KEGG" id="bsi:BS1330_II0584"/>
<dbReference type="HOGENOM" id="CLU_035168_3_0_5"/>
<dbReference type="PhylomeDB" id="Q8FW72"/>
<dbReference type="UniPathway" id="UPA00538">
    <property type="reaction ID" value="UER00592"/>
</dbReference>
<dbReference type="Proteomes" id="UP000007104">
    <property type="component" value="Chromosome II"/>
</dbReference>
<dbReference type="GO" id="GO:0005737">
    <property type="term" value="C:cytoplasm"/>
    <property type="evidence" value="ECO:0007669"/>
    <property type="project" value="UniProtKB-SubCell"/>
</dbReference>
<dbReference type="GO" id="GO:0033819">
    <property type="term" value="F:lipoyl(octanoyl) transferase activity"/>
    <property type="evidence" value="ECO:0007669"/>
    <property type="project" value="UniProtKB-EC"/>
</dbReference>
<dbReference type="GO" id="GO:0036211">
    <property type="term" value="P:protein modification process"/>
    <property type="evidence" value="ECO:0007669"/>
    <property type="project" value="InterPro"/>
</dbReference>
<dbReference type="CDD" id="cd16444">
    <property type="entry name" value="LipB"/>
    <property type="match status" value="1"/>
</dbReference>
<dbReference type="FunFam" id="3.30.930.10:FF:000159">
    <property type="entry name" value="Octanoyltransferase"/>
    <property type="match status" value="1"/>
</dbReference>
<dbReference type="Gene3D" id="3.30.930.10">
    <property type="entry name" value="Bira Bifunctional Protein, Domain 2"/>
    <property type="match status" value="1"/>
</dbReference>
<dbReference type="HAMAP" id="MF_00013">
    <property type="entry name" value="LipB"/>
    <property type="match status" value="1"/>
</dbReference>
<dbReference type="InterPro" id="IPR045864">
    <property type="entry name" value="aa-tRNA-synth_II/BPL/LPL"/>
</dbReference>
<dbReference type="InterPro" id="IPR004143">
    <property type="entry name" value="BPL_LPL_catalytic"/>
</dbReference>
<dbReference type="InterPro" id="IPR000544">
    <property type="entry name" value="Octanoyltransferase"/>
</dbReference>
<dbReference type="InterPro" id="IPR020605">
    <property type="entry name" value="Octanoyltransferase_CS"/>
</dbReference>
<dbReference type="NCBIfam" id="TIGR00214">
    <property type="entry name" value="lipB"/>
    <property type="match status" value="1"/>
</dbReference>
<dbReference type="NCBIfam" id="NF010921">
    <property type="entry name" value="PRK14341.1"/>
    <property type="match status" value="1"/>
</dbReference>
<dbReference type="NCBIfam" id="NF010925">
    <property type="entry name" value="PRK14345.1"/>
    <property type="match status" value="1"/>
</dbReference>
<dbReference type="PANTHER" id="PTHR10993:SF7">
    <property type="entry name" value="LIPOYLTRANSFERASE 2, MITOCHONDRIAL-RELATED"/>
    <property type="match status" value="1"/>
</dbReference>
<dbReference type="PANTHER" id="PTHR10993">
    <property type="entry name" value="OCTANOYLTRANSFERASE"/>
    <property type="match status" value="1"/>
</dbReference>
<dbReference type="Pfam" id="PF21948">
    <property type="entry name" value="LplA-B_cat"/>
    <property type="match status" value="1"/>
</dbReference>
<dbReference type="SUPFAM" id="SSF55681">
    <property type="entry name" value="Class II aaRS and biotin synthetases"/>
    <property type="match status" value="1"/>
</dbReference>
<dbReference type="PROSITE" id="PS51733">
    <property type="entry name" value="BPL_LPL_CATALYTIC"/>
    <property type="match status" value="1"/>
</dbReference>
<dbReference type="PROSITE" id="PS01313">
    <property type="entry name" value="LIPB"/>
    <property type="match status" value="1"/>
</dbReference>
<keyword id="KW-0012">Acyltransferase</keyword>
<keyword id="KW-0963">Cytoplasm</keyword>
<keyword id="KW-0808">Transferase</keyword>
<evidence type="ECO:0000255" key="1">
    <source>
        <dbReference type="HAMAP-Rule" id="MF_00013"/>
    </source>
</evidence>
<evidence type="ECO:0000255" key="2">
    <source>
        <dbReference type="PROSITE-ProRule" id="PRU01067"/>
    </source>
</evidence>
<sequence>MPTGKLRQKPPYAAIMTNSPVTPSTETQQPKRDALYARFLPQEADAPPVEWLIAEGLTDYEEALAFMEARVQAIREGTASELVWLVEHPPLYTAGTSANAEDLLTPDRFPVFNTGRGGEYTYHGPGQRVAYVMLDLKRRREDVRAFVASLEQWIIETLAAFNIMGERREDRVGVWVVRPEKPRLADGSMCEDKIAAIGIRLRRWVSFHGIAINVEPDLSHYGGIVPCGISEHGVTSLVDLGLPVTMGDVDVALGKAFESVFGPRQTK</sequence>
<protein>
    <recommendedName>
        <fullName evidence="1">Octanoyltransferase</fullName>
        <ecNumber evidence="1">2.3.1.181</ecNumber>
    </recommendedName>
    <alternativeName>
        <fullName evidence="1">Lipoate-protein ligase B</fullName>
    </alternativeName>
    <alternativeName>
        <fullName evidence="1">Lipoyl/octanoyl transferase</fullName>
    </alternativeName>
    <alternativeName>
        <fullName evidence="1">Octanoyl-[acyl-carrier-protein]-protein N-octanoyltransferase</fullName>
    </alternativeName>
</protein>
<feature type="chain" id="PRO_0000062819" description="Octanoyltransferase">
    <location>
        <begin position="1"/>
        <end position="267"/>
    </location>
</feature>
<feature type="domain" description="BPL/LPL catalytic" evidence="2">
    <location>
        <begin position="77"/>
        <end position="265"/>
    </location>
</feature>
<feature type="active site" description="Acyl-thioester intermediate" evidence="1">
    <location>
        <position position="227"/>
    </location>
</feature>
<feature type="binding site" evidence="1">
    <location>
        <begin position="116"/>
        <end position="123"/>
    </location>
    <ligand>
        <name>substrate</name>
    </ligand>
</feature>
<feature type="binding site" evidence="1">
    <location>
        <begin position="196"/>
        <end position="198"/>
    </location>
    <ligand>
        <name>substrate</name>
    </ligand>
</feature>
<feature type="binding site" evidence="1">
    <location>
        <begin position="209"/>
        <end position="211"/>
    </location>
    <ligand>
        <name>substrate</name>
    </ligand>
</feature>
<feature type="site" description="Lowers pKa of active site Cys" evidence="1">
    <location>
        <position position="193"/>
    </location>
</feature>
<comment type="function">
    <text evidence="1">Catalyzes the transfer of endogenously produced octanoic acid from octanoyl-acyl-carrier-protein onto the lipoyl domains of lipoate-dependent enzymes. Lipoyl-ACP can also act as a substrate although octanoyl-ACP is likely to be the physiological substrate.</text>
</comment>
<comment type="catalytic activity">
    <reaction evidence="1">
        <text>octanoyl-[ACP] + L-lysyl-[protein] = N(6)-octanoyl-L-lysyl-[protein] + holo-[ACP] + H(+)</text>
        <dbReference type="Rhea" id="RHEA:17665"/>
        <dbReference type="Rhea" id="RHEA-COMP:9636"/>
        <dbReference type="Rhea" id="RHEA-COMP:9685"/>
        <dbReference type="Rhea" id="RHEA-COMP:9752"/>
        <dbReference type="Rhea" id="RHEA-COMP:9928"/>
        <dbReference type="ChEBI" id="CHEBI:15378"/>
        <dbReference type="ChEBI" id="CHEBI:29969"/>
        <dbReference type="ChEBI" id="CHEBI:64479"/>
        <dbReference type="ChEBI" id="CHEBI:78463"/>
        <dbReference type="ChEBI" id="CHEBI:78809"/>
        <dbReference type="EC" id="2.3.1.181"/>
    </reaction>
</comment>
<comment type="pathway">
    <text evidence="1">Protein modification; protein lipoylation via endogenous pathway; protein N(6)-(lipoyl)lysine from octanoyl-[acyl-carrier-protein]: step 1/2.</text>
</comment>
<comment type="subcellular location">
    <subcellularLocation>
        <location evidence="1">Cytoplasm</location>
    </subcellularLocation>
</comment>
<comment type="miscellaneous">
    <text evidence="1">In the reaction, the free carboxyl group of octanoic acid is attached via an amide linkage to the epsilon-amino group of a specific lysine residue of lipoyl domains of lipoate-dependent enzymes.</text>
</comment>
<comment type="similarity">
    <text evidence="1">Belongs to the LipB family.</text>
</comment>
<accession>Q8FW72</accession>
<accession>G0KCW7</accession>
<proteinExistence type="inferred from homology"/>